<protein>
    <recommendedName>
        <fullName evidence="1">Phosphate import ATP-binding protein PstB 3</fullName>
        <ecNumber evidence="1">7.3.2.1</ecNumber>
    </recommendedName>
    <alternativeName>
        <fullName evidence="1">ABC phosphate transporter 3</fullName>
    </alternativeName>
    <alternativeName>
        <fullName evidence="1">Phosphate-transporting ATPase 3</fullName>
    </alternativeName>
</protein>
<organism>
    <name type="scientific">Natronomonas pharaonis (strain ATCC 35678 / DSM 2160 / CIP 103997 / JCM 8858 / NBRC 14720 / NCIMB 2260 / Gabara)</name>
    <name type="common">Halobacterium pharaonis</name>
    <dbReference type="NCBI Taxonomy" id="348780"/>
    <lineage>
        <taxon>Archaea</taxon>
        <taxon>Methanobacteriati</taxon>
        <taxon>Methanobacteriota</taxon>
        <taxon>Stenosarchaea group</taxon>
        <taxon>Halobacteria</taxon>
        <taxon>Halobacteriales</taxon>
        <taxon>Haloarculaceae</taxon>
        <taxon>Natronomonas</taxon>
    </lineage>
</organism>
<keyword id="KW-0067">ATP-binding</keyword>
<keyword id="KW-1003">Cell membrane</keyword>
<keyword id="KW-0472">Membrane</keyword>
<keyword id="KW-0547">Nucleotide-binding</keyword>
<keyword id="KW-0592">Phosphate transport</keyword>
<keyword id="KW-0614">Plasmid</keyword>
<keyword id="KW-1185">Reference proteome</keyword>
<keyword id="KW-1278">Translocase</keyword>
<keyword id="KW-0813">Transport</keyword>
<reference key="1">
    <citation type="journal article" date="2005" name="Genome Res.">
        <title>Living with two extremes: conclusions from the genome sequence of Natronomonas pharaonis.</title>
        <authorList>
            <person name="Falb M."/>
            <person name="Pfeiffer F."/>
            <person name="Palm P."/>
            <person name="Rodewald K."/>
            <person name="Hickmann V."/>
            <person name="Tittor J."/>
            <person name="Oesterhelt D."/>
        </authorList>
    </citation>
    <scope>NUCLEOTIDE SEQUENCE [LARGE SCALE GENOMIC DNA]</scope>
    <source>
        <strain>ATCC 35678 / DSM 2160 / CIP 103997 / JCM 8858 / NBRC 14720 / NCIMB 2260 / Gabara</strain>
    </source>
</reference>
<gene>
    <name evidence="1" type="primary">pstB3</name>
    <name type="synonym">abc15a</name>
    <name type="ordered locus">NP_6098A</name>
</gene>
<feature type="chain" id="PRO_0000272593" description="Phosphate import ATP-binding protein PstB 3">
    <location>
        <begin position="1"/>
        <end position="275"/>
    </location>
</feature>
<feature type="domain" description="ABC transporter" evidence="1">
    <location>
        <begin position="31"/>
        <end position="270"/>
    </location>
</feature>
<feature type="region of interest" description="Disordered" evidence="2">
    <location>
        <begin position="1"/>
        <end position="26"/>
    </location>
</feature>
<feature type="compositionally biased region" description="Polar residues" evidence="2">
    <location>
        <begin position="9"/>
        <end position="18"/>
    </location>
</feature>
<feature type="binding site" evidence="1">
    <location>
        <begin position="63"/>
        <end position="70"/>
    </location>
    <ligand>
        <name>ATP</name>
        <dbReference type="ChEBI" id="CHEBI:30616"/>
    </ligand>
</feature>
<geneLocation type="plasmid">
    <name>PL131</name>
</geneLocation>
<comment type="function">
    <text evidence="1">Part of the ABC transporter complex PstSACB involved in phosphate import. Responsible for energy coupling to the transport system.</text>
</comment>
<comment type="catalytic activity">
    <reaction evidence="1">
        <text>phosphate(out) + ATP + H2O = ADP + 2 phosphate(in) + H(+)</text>
        <dbReference type="Rhea" id="RHEA:24440"/>
        <dbReference type="ChEBI" id="CHEBI:15377"/>
        <dbReference type="ChEBI" id="CHEBI:15378"/>
        <dbReference type="ChEBI" id="CHEBI:30616"/>
        <dbReference type="ChEBI" id="CHEBI:43474"/>
        <dbReference type="ChEBI" id="CHEBI:456216"/>
        <dbReference type="EC" id="7.3.2.1"/>
    </reaction>
</comment>
<comment type="subunit">
    <text evidence="1">The complex is composed of two ATP-binding proteins (PstB), two transmembrane proteins (PstC and PstA) and a solute-binding protein (PstS).</text>
</comment>
<comment type="subcellular location">
    <subcellularLocation>
        <location evidence="1">Cell membrane</location>
        <topology evidence="1">Peripheral membrane protein</topology>
    </subcellularLocation>
</comment>
<comment type="similarity">
    <text evidence="1">Belongs to the ABC transporter superfamily. Phosphate importer (TC 3.A.1.7) family.</text>
</comment>
<name>PSTB3_NATPD</name>
<proteinExistence type="inferred from homology"/>
<sequence>MATQETDDSLISTDVQTDATERGDQPDETVVETKHLDVHYGDEQALDDVSIDIPENKVTALIGPSGCGKSTFLRCINRMNDQIDACRVDGKVVFKGKNVYDDDVDPVALRRKIGQVFQTPNPFPKSIRENVVYGLEVQGEPASDEDVERALRGAALWDEVNNQLDSSGLDLSGGQQQRLCIARAIAPDPEVILMDEPTSALDPVAASKIEDLIDELVEDYTVIIVTHNMQQAARISDKTAVFLTGGNLVEFDDTTNIFENPEDDRVEDYITGKFG</sequence>
<evidence type="ECO:0000255" key="1">
    <source>
        <dbReference type="HAMAP-Rule" id="MF_01702"/>
    </source>
</evidence>
<evidence type="ECO:0000256" key="2">
    <source>
        <dbReference type="SAM" id="MobiDB-lite"/>
    </source>
</evidence>
<accession>Q3IM36</accession>
<dbReference type="EC" id="7.3.2.1" evidence="1"/>
<dbReference type="EMBL" id="CR936258">
    <property type="protein sequence ID" value="CAI50829.1"/>
    <property type="molecule type" value="Genomic_DNA"/>
</dbReference>
<dbReference type="RefSeq" id="WP_011324431.1">
    <property type="nucleotide sequence ID" value="NC_007427.1"/>
</dbReference>
<dbReference type="SMR" id="Q3IM36"/>
<dbReference type="EnsemblBacteria" id="CAI50829">
    <property type="protein sequence ID" value="CAI50829"/>
    <property type="gene ID" value="NP_6098A"/>
</dbReference>
<dbReference type="GeneID" id="3694669"/>
<dbReference type="KEGG" id="nph:NP_6098A"/>
<dbReference type="HOGENOM" id="CLU_000604_1_22_2"/>
<dbReference type="OrthoDB" id="31298at2157"/>
<dbReference type="Proteomes" id="UP000002698">
    <property type="component" value="Plasmid PL131"/>
</dbReference>
<dbReference type="GO" id="GO:0005886">
    <property type="term" value="C:plasma membrane"/>
    <property type="evidence" value="ECO:0007669"/>
    <property type="project" value="UniProtKB-SubCell"/>
</dbReference>
<dbReference type="GO" id="GO:0005524">
    <property type="term" value="F:ATP binding"/>
    <property type="evidence" value="ECO:0007669"/>
    <property type="project" value="UniProtKB-KW"/>
</dbReference>
<dbReference type="GO" id="GO:0016887">
    <property type="term" value="F:ATP hydrolysis activity"/>
    <property type="evidence" value="ECO:0007669"/>
    <property type="project" value="InterPro"/>
</dbReference>
<dbReference type="GO" id="GO:0015415">
    <property type="term" value="F:ATPase-coupled phosphate ion transmembrane transporter activity"/>
    <property type="evidence" value="ECO:0007669"/>
    <property type="project" value="UniProtKB-EC"/>
</dbReference>
<dbReference type="GO" id="GO:0035435">
    <property type="term" value="P:phosphate ion transmembrane transport"/>
    <property type="evidence" value="ECO:0007669"/>
    <property type="project" value="InterPro"/>
</dbReference>
<dbReference type="CDD" id="cd03260">
    <property type="entry name" value="ABC_PstB_phosphate_transporter"/>
    <property type="match status" value="1"/>
</dbReference>
<dbReference type="Gene3D" id="3.40.50.300">
    <property type="entry name" value="P-loop containing nucleotide triphosphate hydrolases"/>
    <property type="match status" value="1"/>
</dbReference>
<dbReference type="InterPro" id="IPR003593">
    <property type="entry name" value="AAA+_ATPase"/>
</dbReference>
<dbReference type="InterPro" id="IPR003439">
    <property type="entry name" value="ABC_transporter-like_ATP-bd"/>
</dbReference>
<dbReference type="InterPro" id="IPR017871">
    <property type="entry name" value="ABC_transporter-like_CS"/>
</dbReference>
<dbReference type="InterPro" id="IPR027417">
    <property type="entry name" value="P-loop_NTPase"/>
</dbReference>
<dbReference type="InterPro" id="IPR005670">
    <property type="entry name" value="PstB-like"/>
</dbReference>
<dbReference type="NCBIfam" id="TIGR00972">
    <property type="entry name" value="3a0107s01c2"/>
    <property type="match status" value="1"/>
</dbReference>
<dbReference type="PANTHER" id="PTHR43423">
    <property type="entry name" value="ABC TRANSPORTER I FAMILY MEMBER 17"/>
    <property type="match status" value="1"/>
</dbReference>
<dbReference type="PANTHER" id="PTHR43423:SF1">
    <property type="entry name" value="ABC TRANSPORTER I FAMILY MEMBER 17"/>
    <property type="match status" value="1"/>
</dbReference>
<dbReference type="Pfam" id="PF00005">
    <property type="entry name" value="ABC_tran"/>
    <property type="match status" value="1"/>
</dbReference>
<dbReference type="SMART" id="SM00382">
    <property type="entry name" value="AAA"/>
    <property type="match status" value="1"/>
</dbReference>
<dbReference type="SUPFAM" id="SSF52540">
    <property type="entry name" value="P-loop containing nucleoside triphosphate hydrolases"/>
    <property type="match status" value="1"/>
</dbReference>
<dbReference type="PROSITE" id="PS00211">
    <property type="entry name" value="ABC_TRANSPORTER_1"/>
    <property type="match status" value="1"/>
</dbReference>
<dbReference type="PROSITE" id="PS50893">
    <property type="entry name" value="ABC_TRANSPORTER_2"/>
    <property type="match status" value="1"/>
</dbReference>
<dbReference type="PROSITE" id="PS51238">
    <property type="entry name" value="PSTB"/>
    <property type="match status" value="1"/>
</dbReference>